<evidence type="ECO:0000255" key="1">
    <source>
        <dbReference type="HAMAP-Rule" id="MF_00195"/>
    </source>
</evidence>
<name>DER_PROM1</name>
<gene>
    <name evidence="1" type="primary">der</name>
    <name type="synonym">engA</name>
    <name type="ordered locus">NATL1_04431</name>
</gene>
<comment type="function">
    <text evidence="1">GTPase that plays an essential role in the late steps of ribosome biogenesis.</text>
</comment>
<comment type="subunit">
    <text evidence="1">Associates with the 50S ribosomal subunit.</text>
</comment>
<comment type="similarity">
    <text evidence="1">Belongs to the TRAFAC class TrmE-Era-EngA-EngB-Septin-like GTPase superfamily. EngA (Der) GTPase family.</text>
</comment>
<sequence length="456" mass="50953">MALPVVAIIGRPNVGKSTLVNRLCQSREAIVHDEPGVTRDRTYQDGFWRDRDFKVVDTGGLVFDDDSEFLPEIREQANLALEEAVVALVIVDGQEGITTADESIAEFLRSRSCKTLVVVNKCESPEQGLAMAAEFWKLGLGEPYPISAIHGVGTGDLLDQVVNLFPSKDLDEVSDSPVQLAIIGRPNVGKSSLLNSICGETRAIVSSIRGTTRDTIDTRITHQGKEWKLVDTAGIRRRRSVNYGPEFFGINRSFKAIERSDVCVLVIDALDGVTEQDQRLAGRIEQEGRACLIVINKWDAVEKDSHTMSAMEKDIRSKLYFLDWAQMIFTSAVTGQRVEGIFALATLAVDQSRRRVTTSVVNEVLTEALKWRSPPTTRGGKQGRLYYGTQVAINPPSFTLFVNEPKLFGETYRRYIERQIREGLGFEGTPIKLFWRGKQQRDVEKDMARQQKGVQN</sequence>
<dbReference type="EMBL" id="CP000553">
    <property type="protein sequence ID" value="ABM75007.1"/>
    <property type="molecule type" value="Genomic_DNA"/>
</dbReference>
<dbReference type="RefSeq" id="WP_011823194.1">
    <property type="nucleotide sequence ID" value="NC_008819.1"/>
</dbReference>
<dbReference type="SMR" id="A2C0J7"/>
<dbReference type="KEGG" id="pme:NATL1_04431"/>
<dbReference type="eggNOG" id="COG1160">
    <property type="taxonomic scope" value="Bacteria"/>
</dbReference>
<dbReference type="HOGENOM" id="CLU_016077_6_2_3"/>
<dbReference type="Proteomes" id="UP000002592">
    <property type="component" value="Chromosome"/>
</dbReference>
<dbReference type="GO" id="GO:0016887">
    <property type="term" value="F:ATP hydrolysis activity"/>
    <property type="evidence" value="ECO:0007669"/>
    <property type="project" value="InterPro"/>
</dbReference>
<dbReference type="GO" id="GO:0005525">
    <property type="term" value="F:GTP binding"/>
    <property type="evidence" value="ECO:0007669"/>
    <property type="project" value="UniProtKB-UniRule"/>
</dbReference>
<dbReference type="GO" id="GO:0043022">
    <property type="term" value="F:ribosome binding"/>
    <property type="evidence" value="ECO:0007669"/>
    <property type="project" value="TreeGrafter"/>
</dbReference>
<dbReference type="GO" id="GO:0042254">
    <property type="term" value="P:ribosome biogenesis"/>
    <property type="evidence" value="ECO:0007669"/>
    <property type="project" value="UniProtKB-KW"/>
</dbReference>
<dbReference type="CDD" id="cd01894">
    <property type="entry name" value="EngA1"/>
    <property type="match status" value="1"/>
</dbReference>
<dbReference type="CDD" id="cd01895">
    <property type="entry name" value="EngA2"/>
    <property type="match status" value="1"/>
</dbReference>
<dbReference type="FunFam" id="3.30.300.20:FF:000004">
    <property type="entry name" value="GTPase Der"/>
    <property type="match status" value="1"/>
</dbReference>
<dbReference type="FunFam" id="3.40.50.300:FF:000040">
    <property type="entry name" value="GTPase Der"/>
    <property type="match status" value="1"/>
</dbReference>
<dbReference type="FunFam" id="3.40.50.300:FF:000057">
    <property type="entry name" value="GTPase Der"/>
    <property type="match status" value="1"/>
</dbReference>
<dbReference type="Gene3D" id="3.30.300.20">
    <property type="match status" value="1"/>
</dbReference>
<dbReference type="Gene3D" id="3.40.50.300">
    <property type="entry name" value="P-loop containing nucleotide triphosphate hydrolases"/>
    <property type="match status" value="2"/>
</dbReference>
<dbReference type="HAMAP" id="MF_00195">
    <property type="entry name" value="GTPase_Der"/>
    <property type="match status" value="1"/>
</dbReference>
<dbReference type="InterPro" id="IPR003593">
    <property type="entry name" value="AAA+_ATPase"/>
</dbReference>
<dbReference type="InterPro" id="IPR031166">
    <property type="entry name" value="G_ENGA"/>
</dbReference>
<dbReference type="InterPro" id="IPR006073">
    <property type="entry name" value="GTP-bd"/>
</dbReference>
<dbReference type="InterPro" id="IPR016484">
    <property type="entry name" value="GTPase_Der"/>
</dbReference>
<dbReference type="InterPro" id="IPR032859">
    <property type="entry name" value="KH_dom-like"/>
</dbReference>
<dbReference type="InterPro" id="IPR015946">
    <property type="entry name" value="KH_dom-like_a/b"/>
</dbReference>
<dbReference type="InterPro" id="IPR027417">
    <property type="entry name" value="P-loop_NTPase"/>
</dbReference>
<dbReference type="InterPro" id="IPR005225">
    <property type="entry name" value="Small_GTP-bd"/>
</dbReference>
<dbReference type="NCBIfam" id="TIGR03594">
    <property type="entry name" value="GTPase_EngA"/>
    <property type="match status" value="1"/>
</dbReference>
<dbReference type="NCBIfam" id="TIGR00231">
    <property type="entry name" value="small_GTP"/>
    <property type="match status" value="2"/>
</dbReference>
<dbReference type="PANTHER" id="PTHR43834">
    <property type="entry name" value="GTPASE DER"/>
    <property type="match status" value="1"/>
</dbReference>
<dbReference type="PANTHER" id="PTHR43834:SF6">
    <property type="entry name" value="GTPASE DER"/>
    <property type="match status" value="1"/>
</dbReference>
<dbReference type="Pfam" id="PF14714">
    <property type="entry name" value="KH_dom-like"/>
    <property type="match status" value="1"/>
</dbReference>
<dbReference type="Pfam" id="PF01926">
    <property type="entry name" value="MMR_HSR1"/>
    <property type="match status" value="2"/>
</dbReference>
<dbReference type="PIRSF" id="PIRSF006485">
    <property type="entry name" value="GTP-binding_EngA"/>
    <property type="match status" value="1"/>
</dbReference>
<dbReference type="PRINTS" id="PR00326">
    <property type="entry name" value="GTP1OBG"/>
</dbReference>
<dbReference type="SMART" id="SM00382">
    <property type="entry name" value="AAA"/>
    <property type="match status" value="2"/>
</dbReference>
<dbReference type="SUPFAM" id="SSF52540">
    <property type="entry name" value="P-loop containing nucleoside triphosphate hydrolases"/>
    <property type="match status" value="2"/>
</dbReference>
<dbReference type="PROSITE" id="PS51712">
    <property type="entry name" value="G_ENGA"/>
    <property type="match status" value="2"/>
</dbReference>
<accession>A2C0J7</accession>
<reference key="1">
    <citation type="journal article" date="2007" name="PLoS Genet.">
        <title>Patterns and implications of gene gain and loss in the evolution of Prochlorococcus.</title>
        <authorList>
            <person name="Kettler G.C."/>
            <person name="Martiny A.C."/>
            <person name="Huang K."/>
            <person name="Zucker J."/>
            <person name="Coleman M.L."/>
            <person name="Rodrigue S."/>
            <person name="Chen F."/>
            <person name="Lapidus A."/>
            <person name="Ferriera S."/>
            <person name="Johnson J."/>
            <person name="Steglich C."/>
            <person name="Church G.M."/>
            <person name="Richardson P."/>
            <person name="Chisholm S.W."/>
        </authorList>
    </citation>
    <scope>NUCLEOTIDE SEQUENCE [LARGE SCALE GENOMIC DNA]</scope>
    <source>
        <strain>NATL1A</strain>
    </source>
</reference>
<proteinExistence type="inferred from homology"/>
<feature type="chain" id="PRO_1000011691" description="GTPase Der">
    <location>
        <begin position="1"/>
        <end position="456"/>
    </location>
</feature>
<feature type="domain" description="EngA-type G 1">
    <location>
        <begin position="4"/>
        <end position="169"/>
    </location>
</feature>
<feature type="domain" description="EngA-type G 2">
    <location>
        <begin position="178"/>
        <end position="353"/>
    </location>
</feature>
<feature type="domain" description="KH-like" evidence="1">
    <location>
        <begin position="354"/>
        <end position="439"/>
    </location>
</feature>
<feature type="binding site" evidence="1">
    <location>
        <begin position="10"/>
        <end position="17"/>
    </location>
    <ligand>
        <name>GTP</name>
        <dbReference type="ChEBI" id="CHEBI:37565"/>
        <label>1</label>
    </ligand>
</feature>
<feature type="binding site" evidence="1">
    <location>
        <begin position="57"/>
        <end position="61"/>
    </location>
    <ligand>
        <name>GTP</name>
        <dbReference type="ChEBI" id="CHEBI:37565"/>
        <label>1</label>
    </ligand>
</feature>
<feature type="binding site" evidence="1">
    <location>
        <begin position="120"/>
        <end position="123"/>
    </location>
    <ligand>
        <name>GTP</name>
        <dbReference type="ChEBI" id="CHEBI:37565"/>
        <label>1</label>
    </ligand>
</feature>
<feature type="binding site" evidence="1">
    <location>
        <begin position="184"/>
        <end position="191"/>
    </location>
    <ligand>
        <name>GTP</name>
        <dbReference type="ChEBI" id="CHEBI:37565"/>
        <label>2</label>
    </ligand>
</feature>
<feature type="binding site" evidence="1">
    <location>
        <begin position="231"/>
        <end position="235"/>
    </location>
    <ligand>
        <name>GTP</name>
        <dbReference type="ChEBI" id="CHEBI:37565"/>
        <label>2</label>
    </ligand>
</feature>
<feature type="binding site" evidence="1">
    <location>
        <begin position="296"/>
        <end position="299"/>
    </location>
    <ligand>
        <name>GTP</name>
        <dbReference type="ChEBI" id="CHEBI:37565"/>
        <label>2</label>
    </ligand>
</feature>
<keyword id="KW-0342">GTP-binding</keyword>
<keyword id="KW-0547">Nucleotide-binding</keyword>
<keyword id="KW-0677">Repeat</keyword>
<keyword id="KW-0690">Ribosome biogenesis</keyword>
<protein>
    <recommendedName>
        <fullName evidence="1">GTPase Der</fullName>
    </recommendedName>
    <alternativeName>
        <fullName evidence="1">GTP-binding protein EngA</fullName>
    </alternativeName>
</protein>
<organism>
    <name type="scientific">Prochlorococcus marinus (strain NATL1A)</name>
    <dbReference type="NCBI Taxonomy" id="167555"/>
    <lineage>
        <taxon>Bacteria</taxon>
        <taxon>Bacillati</taxon>
        <taxon>Cyanobacteriota</taxon>
        <taxon>Cyanophyceae</taxon>
        <taxon>Synechococcales</taxon>
        <taxon>Prochlorococcaceae</taxon>
        <taxon>Prochlorococcus</taxon>
    </lineage>
</organism>